<keyword id="KW-1185">Reference proteome</keyword>
<sequence length="206" mass="22710">MAEYLVPKSAVVFEEEIKKSRFITYLQHTEGLEDARAFWAKIKQEHPNARHHCWAAVAGKPTDSLQLGFSDDGEPAGTAGKPMLSALQGSQLGEISAVVVRYYGGILLGTGGLVRAYGNGVQQALKLIESEIKVERTLFKLDCDYGQLRLVQQLCEKYQVEILSQGFQANIHLILGISEKTIEAFSSELTEKSSGRLVIQLLEIGE</sequence>
<feature type="chain" id="PRO_0000207660" description="IMPACT family member HI_0722">
    <location>
        <begin position="1"/>
        <end position="206"/>
    </location>
</feature>
<protein>
    <recommendedName>
        <fullName>IMPACT family member HI_0722</fullName>
    </recommendedName>
</protein>
<reference key="1">
    <citation type="journal article" date="1995" name="Science">
        <title>Whole-genome random sequencing and assembly of Haemophilus influenzae Rd.</title>
        <authorList>
            <person name="Fleischmann R.D."/>
            <person name="Adams M.D."/>
            <person name="White O."/>
            <person name="Clayton R.A."/>
            <person name="Kirkness E.F."/>
            <person name="Kerlavage A.R."/>
            <person name="Bult C.J."/>
            <person name="Tomb J.-F."/>
            <person name="Dougherty B.A."/>
            <person name="Merrick J.M."/>
            <person name="McKenney K."/>
            <person name="Sutton G.G."/>
            <person name="FitzHugh W."/>
            <person name="Fields C.A."/>
            <person name="Gocayne J.D."/>
            <person name="Scott J.D."/>
            <person name="Shirley R."/>
            <person name="Liu L.-I."/>
            <person name="Glodek A."/>
            <person name="Kelley J.M."/>
            <person name="Weidman J.F."/>
            <person name="Phillips C.A."/>
            <person name="Spriggs T."/>
            <person name="Hedblom E."/>
            <person name="Cotton M.D."/>
            <person name="Utterback T.R."/>
            <person name="Hanna M.C."/>
            <person name="Nguyen D.T."/>
            <person name="Saudek D.M."/>
            <person name="Brandon R.C."/>
            <person name="Fine L.D."/>
            <person name="Fritchman J.L."/>
            <person name="Fuhrmann J.L."/>
            <person name="Geoghagen N.S.M."/>
            <person name="Gnehm C.L."/>
            <person name="McDonald L.A."/>
            <person name="Small K.V."/>
            <person name="Fraser C.M."/>
            <person name="Smith H.O."/>
            <person name="Venter J.C."/>
        </authorList>
    </citation>
    <scope>NUCLEOTIDE SEQUENCE [LARGE SCALE GENOMIC DNA]</scope>
    <source>
        <strain>ATCC 51907 / DSM 11121 / KW20 / Rd</strain>
    </source>
</reference>
<dbReference type="EMBL" id="L42023">
    <property type="protein sequence ID" value="AAC22380.1"/>
    <property type="molecule type" value="Genomic_DNA"/>
</dbReference>
<dbReference type="PIR" id="I64088">
    <property type="entry name" value="I64088"/>
</dbReference>
<dbReference type="RefSeq" id="NP_438880.2">
    <property type="nucleotide sequence ID" value="NC_000907.1"/>
</dbReference>
<dbReference type="SMR" id="P44842"/>
<dbReference type="STRING" id="71421.HI_0722"/>
<dbReference type="DNASU" id="949742"/>
<dbReference type="EnsemblBacteria" id="AAC22380">
    <property type="protein sequence ID" value="AAC22380"/>
    <property type="gene ID" value="HI_0722"/>
</dbReference>
<dbReference type="KEGG" id="hin:HI_0722"/>
<dbReference type="PATRIC" id="fig|71421.8.peg.754"/>
<dbReference type="eggNOG" id="COG1739">
    <property type="taxonomic scope" value="Bacteria"/>
</dbReference>
<dbReference type="HOGENOM" id="CLU_083552_0_0_6"/>
<dbReference type="OrthoDB" id="9813771at2"/>
<dbReference type="PhylomeDB" id="P44842"/>
<dbReference type="Proteomes" id="UP000000579">
    <property type="component" value="Chromosome"/>
</dbReference>
<dbReference type="GO" id="GO:0005737">
    <property type="term" value="C:cytoplasm"/>
    <property type="evidence" value="ECO:0000318"/>
    <property type="project" value="GO_Central"/>
</dbReference>
<dbReference type="GO" id="GO:0032561">
    <property type="term" value="F:guanyl ribonucleotide binding"/>
    <property type="evidence" value="ECO:0007669"/>
    <property type="project" value="UniProtKB-ARBA"/>
</dbReference>
<dbReference type="GO" id="GO:0017111">
    <property type="term" value="F:ribonucleoside triphosphate phosphatase activity"/>
    <property type="evidence" value="ECO:0007669"/>
    <property type="project" value="UniProtKB-ARBA"/>
</dbReference>
<dbReference type="GO" id="GO:0006446">
    <property type="term" value="P:regulation of translational initiation"/>
    <property type="evidence" value="ECO:0000318"/>
    <property type="project" value="GO_Central"/>
</dbReference>
<dbReference type="Gene3D" id="3.30.70.240">
    <property type="match status" value="1"/>
</dbReference>
<dbReference type="Gene3D" id="3.30.230.30">
    <property type="entry name" value="Impact, N-terminal domain"/>
    <property type="match status" value="1"/>
</dbReference>
<dbReference type="InterPro" id="IPR035647">
    <property type="entry name" value="EFG_III/V"/>
</dbReference>
<dbReference type="InterPro" id="IPR023582">
    <property type="entry name" value="Impact"/>
</dbReference>
<dbReference type="InterPro" id="IPR001498">
    <property type="entry name" value="Impact_N"/>
</dbReference>
<dbReference type="InterPro" id="IPR036956">
    <property type="entry name" value="Impact_N_sf"/>
</dbReference>
<dbReference type="InterPro" id="IPR015796">
    <property type="entry name" value="Impact_YigZ-like"/>
</dbReference>
<dbReference type="InterPro" id="IPR020568">
    <property type="entry name" value="Ribosomal_Su5_D2-typ_SF"/>
</dbReference>
<dbReference type="InterPro" id="IPR015269">
    <property type="entry name" value="UPF0029_Impact_C"/>
</dbReference>
<dbReference type="InterPro" id="IPR020569">
    <property type="entry name" value="UPF0029_Impact_CS"/>
</dbReference>
<dbReference type="NCBIfam" id="TIGR00257">
    <property type="entry name" value="IMPACT_YIGZ"/>
    <property type="match status" value="1"/>
</dbReference>
<dbReference type="PANTHER" id="PTHR16301:SF20">
    <property type="entry name" value="IMPACT FAMILY MEMBER YIGZ"/>
    <property type="match status" value="1"/>
</dbReference>
<dbReference type="PANTHER" id="PTHR16301">
    <property type="entry name" value="IMPACT-RELATED"/>
    <property type="match status" value="1"/>
</dbReference>
<dbReference type="Pfam" id="PF09186">
    <property type="entry name" value="DUF1949"/>
    <property type="match status" value="1"/>
</dbReference>
<dbReference type="Pfam" id="PF01205">
    <property type="entry name" value="UPF0029"/>
    <property type="match status" value="1"/>
</dbReference>
<dbReference type="SUPFAM" id="SSF54980">
    <property type="entry name" value="EF-G C-terminal domain-like"/>
    <property type="match status" value="1"/>
</dbReference>
<dbReference type="SUPFAM" id="SSF54211">
    <property type="entry name" value="Ribosomal protein S5 domain 2-like"/>
    <property type="match status" value="1"/>
</dbReference>
<dbReference type="PROSITE" id="PS00910">
    <property type="entry name" value="UPF0029"/>
    <property type="match status" value="1"/>
</dbReference>
<proteinExistence type="inferred from homology"/>
<organism>
    <name type="scientific">Haemophilus influenzae (strain ATCC 51907 / DSM 11121 / KW20 / Rd)</name>
    <dbReference type="NCBI Taxonomy" id="71421"/>
    <lineage>
        <taxon>Bacteria</taxon>
        <taxon>Pseudomonadati</taxon>
        <taxon>Pseudomonadota</taxon>
        <taxon>Gammaproteobacteria</taxon>
        <taxon>Pasteurellales</taxon>
        <taxon>Pasteurellaceae</taxon>
        <taxon>Haemophilus</taxon>
    </lineage>
</organism>
<accession>P44842</accession>
<comment type="similarity">
    <text evidence="1">Belongs to the IMPACT family.</text>
</comment>
<name>Y722_HAEIN</name>
<gene>
    <name type="ordered locus">HI_0722</name>
</gene>
<evidence type="ECO:0000305" key="1"/>